<comment type="function">
    <text evidence="1">Catalyzes the anti-1,4-elimination of the C-3 phosphate and the C-6 proR hydrogen from 5-enolpyruvylshikimate-3-phosphate (EPSP) to yield chorismate, which is the branch point compound that serves as the starting substrate for the three terminal pathways of aromatic amino acid biosynthesis. This reaction introduces a second double bond into the aromatic ring system.</text>
</comment>
<comment type="catalytic activity">
    <reaction evidence="1">
        <text>5-O-(1-carboxyvinyl)-3-phosphoshikimate = chorismate + phosphate</text>
        <dbReference type="Rhea" id="RHEA:21020"/>
        <dbReference type="ChEBI" id="CHEBI:29748"/>
        <dbReference type="ChEBI" id="CHEBI:43474"/>
        <dbReference type="ChEBI" id="CHEBI:57701"/>
        <dbReference type="EC" id="4.2.3.5"/>
    </reaction>
</comment>
<comment type="cofactor">
    <cofactor evidence="1">
        <name>FMNH2</name>
        <dbReference type="ChEBI" id="CHEBI:57618"/>
    </cofactor>
    <text evidence="1">Reduced FMN (FMNH(2)).</text>
</comment>
<comment type="pathway">
    <text evidence="1">Metabolic intermediate biosynthesis; chorismate biosynthesis; chorismate from D-erythrose 4-phosphate and phosphoenolpyruvate: step 7/7.</text>
</comment>
<comment type="subunit">
    <text evidence="1">Homotetramer.</text>
</comment>
<comment type="similarity">
    <text evidence="1">Belongs to the chorismate synthase family.</text>
</comment>
<keyword id="KW-0028">Amino-acid biosynthesis</keyword>
<keyword id="KW-0057">Aromatic amino acid biosynthesis</keyword>
<keyword id="KW-0274">FAD</keyword>
<keyword id="KW-0285">Flavoprotein</keyword>
<keyword id="KW-0288">FMN</keyword>
<keyword id="KW-0456">Lyase</keyword>
<keyword id="KW-0521">NADP</keyword>
<dbReference type="EC" id="4.2.3.5" evidence="1"/>
<dbReference type="EMBL" id="CP000514">
    <property type="protein sequence ID" value="ABM18652.1"/>
    <property type="molecule type" value="Genomic_DNA"/>
</dbReference>
<dbReference type="RefSeq" id="WP_011785054.1">
    <property type="nucleotide sequence ID" value="NC_008740.1"/>
</dbReference>
<dbReference type="SMR" id="A1U0Y3"/>
<dbReference type="STRING" id="351348.Maqu_1568"/>
<dbReference type="KEGG" id="maq:Maqu_1568"/>
<dbReference type="eggNOG" id="COG0082">
    <property type="taxonomic scope" value="Bacteria"/>
</dbReference>
<dbReference type="HOGENOM" id="CLU_034547_0_2_6"/>
<dbReference type="OrthoDB" id="9771806at2"/>
<dbReference type="UniPathway" id="UPA00053">
    <property type="reaction ID" value="UER00090"/>
</dbReference>
<dbReference type="Proteomes" id="UP000000998">
    <property type="component" value="Chromosome"/>
</dbReference>
<dbReference type="GO" id="GO:0005829">
    <property type="term" value="C:cytosol"/>
    <property type="evidence" value="ECO:0007669"/>
    <property type="project" value="TreeGrafter"/>
</dbReference>
<dbReference type="GO" id="GO:0004107">
    <property type="term" value="F:chorismate synthase activity"/>
    <property type="evidence" value="ECO:0007669"/>
    <property type="project" value="UniProtKB-UniRule"/>
</dbReference>
<dbReference type="GO" id="GO:0010181">
    <property type="term" value="F:FMN binding"/>
    <property type="evidence" value="ECO:0007669"/>
    <property type="project" value="TreeGrafter"/>
</dbReference>
<dbReference type="GO" id="GO:0008652">
    <property type="term" value="P:amino acid biosynthetic process"/>
    <property type="evidence" value="ECO:0007669"/>
    <property type="project" value="UniProtKB-KW"/>
</dbReference>
<dbReference type="GO" id="GO:0009073">
    <property type="term" value="P:aromatic amino acid family biosynthetic process"/>
    <property type="evidence" value="ECO:0007669"/>
    <property type="project" value="UniProtKB-KW"/>
</dbReference>
<dbReference type="GO" id="GO:0009423">
    <property type="term" value="P:chorismate biosynthetic process"/>
    <property type="evidence" value="ECO:0007669"/>
    <property type="project" value="UniProtKB-UniRule"/>
</dbReference>
<dbReference type="CDD" id="cd07304">
    <property type="entry name" value="Chorismate_synthase"/>
    <property type="match status" value="1"/>
</dbReference>
<dbReference type="FunFam" id="3.60.150.10:FF:000001">
    <property type="entry name" value="Chorismate synthase"/>
    <property type="match status" value="1"/>
</dbReference>
<dbReference type="Gene3D" id="3.60.150.10">
    <property type="entry name" value="Chorismate synthase AroC"/>
    <property type="match status" value="1"/>
</dbReference>
<dbReference type="HAMAP" id="MF_00300">
    <property type="entry name" value="Chorismate_synth"/>
    <property type="match status" value="1"/>
</dbReference>
<dbReference type="InterPro" id="IPR000453">
    <property type="entry name" value="Chorismate_synth"/>
</dbReference>
<dbReference type="InterPro" id="IPR035904">
    <property type="entry name" value="Chorismate_synth_AroC_sf"/>
</dbReference>
<dbReference type="InterPro" id="IPR020541">
    <property type="entry name" value="Chorismate_synthase_CS"/>
</dbReference>
<dbReference type="NCBIfam" id="TIGR00033">
    <property type="entry name" value="aroC"/>
    <property type="match status" value="1"/>
</dbReference>
<dbReference type="NCBIfam" id="NF003793">
    <property type="entry name" value="PRK05382.1"/>
    <property type="match status" value="1"/>
</dbReference>
<dbReference type="PANTHER" id="PTHR21085">
    <property type="entry name" value="CHORISMATE SYNTHASE"/>
    <property type="match status" value="1"/>
</dbReference>
<dbReference type="PANTHER" id="PTHR21085:SF0">
    <property type="entry name" value="CHORISMATE SYNTHASE"/>
    <property type="match status" value="1"/>
</dbReference>
<dbReference type="Pfam" id="PF01264">
    <property type="entry name" value="Chorismate_synt"/>
    <property type="match status" value="1"/>
</dbReference>
<dbReference type="PIRSF" id="PIRSF001456">
    <property type="entry name" value="Chorismate_synth"/>
    <property type="match status" value="1"/>
</dbReference>
<dbReference type="SUPFAM" id="SSF103263">
    <property type="entry name" value="Chorismate synthase, AroC"/>
    <property type="match status" value="1"/>
</dbReference>
<dbReference type="PROSITE" id="PS00787">
    <property type="entry name" value="CHORISMATE_SYNTHASE_1"/>
    <property type="match status" value="1"/>
</dbReference>
<dbReference type="PROSITE" id="PS00788">
    <property type="entry name" value="CHORISMATE_SYNTHASE_2"/>
    <property type="match status" value="1"/>
</dbReference>
<dbReference type="PROSITE" id="PS00789">
    <property type="entry name" value="CHORISMATE_SYNTHASE_3"/>
    <property type="match status" value="1"/>
</dbReference>
<protein>
    <recommendedName>
        <fullName evidence="1">Chorismate synthase</fullName>
        <shortName evidence="1">CS</shortName>
        <ecNumber evidence="1">4.2.3.5</ecNumber>
    </recommendedName>
    <alternativeName>
        <fullName evidence="1">5-enolpyruvylshikimate-3-phosphate phospholyase</fullName>
    </alternativeName>
</protein>
<reference key="1">
    <citation type="journal article" date="2011" name="Appl. Environ. Microbiol.">
        <title>Genomic potential of Marinobacter aquaeolei, a biogeochemical 'opportunitroph'.</title>
        <authorList>
            <person name="Singer E."/>
            <person name="Webb E.A."/>
            <person name="Nelson W.C."/>
            <person name="Heidelberg J.F."/>
            <person name="Ivanova N."/>
            <person name="Pati A."/>
            <person name="Edwards K.J."/>
        </authorList>
    </citation>
    <scope>NUCLEOTIDE SEQUENCE [LARGE SCALE GENOMIC DNA]</scope>
    <source>
        <strain>ATCC 700491 / DSM 11845 / VT8</strain>
    </source>
</reference>
<accession>A1U0Y3</accession>
<name>AROC_MARN8</name>
<evidence type="ECO:0000255" key="1">
    <source>
        <dbReference type="HAMAP-Rule" id="MF_00300"/>
    </source>
</evidence>
<feature type="chain" id="PRO_1000022510" description="Chorismate synthase">
    <location>
        <begin position="1"/>
        <end position="364"/>
    </location>
</feature>
<feature type="binding site" evidence="1">
    <location>
        <position position="48"/>
    </location>
    <ligand>
        <name>NADP(+)</name>
        <dbReference type="ChEBI" id="CHEBI:58349"/>
    </ligand>
</feature>
<feature type="binding site" evidence="1">
    <location>
        <position position="54"/>
    </location>
    <ligand>
        <name>NADP(+)</name>
        <dbReference type="ChEBI" id="CHEBI:58349"/>
    </ligand>
</feature>
<feature type="binding site" evidence="1">
    <location>
        <begin position="125"/>
        <end position="127"/>
    </location>
    <ligand>
        <name>FMN</name>
        <dbReference type="ChEBI" id="CHEBI:58210"/>
    </ligand>
</feature>
<feature type="binding site" evidence="1">
    <location>
        <begin position="238"/>
        <end position="239"/>
    </location>
    <ligand>
        <name>FMN</name>
        <dbReference type="ChEBI" id="CHEBI:58210"/>
    </ligand>
</feature>
<feature type="binding site" evidence="1">
    <location>
        <position position="278"/>
    </location>
    <ligand>
        <name>FMN</name>
        <dbReference type="ChEBI" id="CHEBI:58210"/>
    </ligand>
</feature>
<feature type="binding site" evidence="1">
    <location>
        <begin position="293"/>
        <end position="297"/>
    </location>
    <ligand>
        <name>FMN</name>
        <dbReference type="ChEBI" id="CHEBI:58210"/>
    </ligand>
</feature>
<feature type="binding site" evidence="1">
    <location>
        <position position="319"/>
    </location>
    <ligand>
        <name>FMN</name>
        <dbReference type="ChEBI" id="CHEBI:58210"/>
    </ligand>
</feature>
<organism>
    <name type="scientific">Marinobacter nauticus (strain ATCC 700491 / DSM 11845 / VT8)</name>
    <name type="common">Marinobacter aquaeolei</name>
    <dbReference type="NCBI Taxonomy" id="351348"/>
    <lineage>
        <taxon>Bacteria</taxon>
        <taxon>Pseudomonadati</taxon>
        <taxon>Pseudomonadota</taxon>
        <taxon>Gammaproteobacteria</taxon>
        <taxon>Pseudomonadales</taxon>
        <taxon>Marinobacteraceae</taxon>
        <taxon>Marinobacter</taxon>
    </lineage>
</organism>
<proteinExistence type="inferred from homology"/>
<gene>
    <name evidence="1" type="primary">aroC</name>
    <name type="ordered locus">Maqu_1568</name>
</gene>
<sequence>MSGNTFGKLFTVTTFGESHGAALGCIIDGCPPGLELSEEDMQRDLDRRKPGTSRHTTQRREADEVRILSGVFEGKTTGTPIGLIIENTDQRSKDYSRIAAQFRPAHADYTYHHKYGARDYRGGGRSSARETAMRVAAGAVARKFLEQRLGIKVRGYLSQLGPIKTDKLDWEQVHQNPFFCPDADKVSEMEAYMDALRKEGDSIGARINVVAEGVPPGLGEPIFDRLDADLAHALMSINAVKGVEIGAGFDCIEQKGTEHRDEMTPEGFLSNNAGGVLGGISSGQPIVASIALKPTSSLRLPGKGIDVDGNPVEVITTGRHDPCVGIRATPIAEAMMAIVLMDHYLRHRGQNGDVEVTTPVLGQL</sequence>